<proteinExistence type="inferred from homology"/>
<gene>
    <name evidence="1" type="primary">glcB</name>
    <name type="ordered locus">Bpet4866</name>
</gene>
<keyword id="KW-0963">Cytoplasm</keyword>
<keyword id="KW-0329">Glyoxylate bypass</keyword>
<keyword id="KW-0460">Magnesium</keyword>
<keyword id="KW-0479">Metal-binding</keyword>
<keyword id="KW-0558">Oxidation</keyword>
<keyword id="KW-0808">Transferase</keyword>
<keyword id="KW-0816">Tricarboxylic acid cycle</keyword>
<evidence type="ECO:0000255" key="1">
    <source>
        <dbReference type="HAMAP-Rule" id="MF_00641"/>
    </source>
</evidence>
<reference key="1">
    <citation type="journal article" date="2008" name="BMC Genomics">
        <title>The missing link: Bordetella petrii is endowed with both the metabolic versatility of environmental bacteria and virulence traits of pathogenic Bordetellae.</title>
        <authorList>
            <person name="Gross R."/>
            <person name="Guzman C.A."/>
            <person name="Sebaihia M."/>
            <person name="Martin dos Santos V.A.P."/>
            <person name="Pieper D.H."/>
            <person name="Koebnik R."/>
            <person name="Lechner M."/>
            <person name="Bartels D."/>
            <person name="Buhrmester J."/>
            <person name="Choudhuri J.V."/>
            <person name="Ebensen T."/>
            <person name="Gaigalat L."/>
            <person name="Herrmann S."/>
            <person name="Khachane A.N."/>
            <person name="Larisch C."/>
            <person name="Link S."/>
            <person name="Linke B."/>
            <person name="Meyer F."/>
            <person name="Mormann S."/>
            <person name="Nakunst D."/>
            <person name="Rueckert C."/>
            <person name="Schneiker-Bekel S."/>
            <person name="Schulze K."/>
            <person name="Voerholter F.-J."/>
            <person name="Yevsa T."/>
            <person name="Engle J.T."/>
            <person name="Goldman W.E."/>
            <person name="Puehler A."/>
            <person name="Goebel U.B."/>
            <person name="Goesmann A."/>
            <person name="Bloecker H."/>
            <person name="Kaiser O."/>
            <person name="Martinez-Arias R."/>
        </authorList>
    </citation>
    <scope>NUCLEOTIDE SEQUENCE [LARGE SCALE GENOMIC DNA]</scope>
    <source>
        <strain>ATCC BAA-461 / DSM 12804 / CCUG 43448</strain>
    </source>
</reference>
<feature type="chain" id="PRO_1000130887" description="Malate synthase G">
    <location>
        <begin position="1"/>
        <end position="726"/>
    </location>
</feature>
<feature type="active site" description="Proton acceptor" evidence="1">
    <location>
        <position position="338"/>
    </location>
</feature>
<feature type="active site" description="Proton donor" evidence="1">
    <location>
        <position position="631"/>
    </location>
</feature>
<feature type="binding site" evidence="1">
    <location>
        <position position="118"/>
    </location>
    <ligand>
        <name>acetyl-CoA</name>
        <dbReference type="ChEBI" id="CHEBI:57288"/>
    </ligand>
</feature>
<feature type="binding site" evidence="1">
    <location>
        <begin position="125"/>
        <end position="126"/>
    </location>
    <ligand>
        <name>acetyl-CoA</name>
        <dbReference type="ChEBI" id="CHEBI:57288"/>
    </ligand>
</feature>
<feature type="binding site" evidence="1">
    <location>
        <position position="274"/>
    </location>
    <ligand>
        <name>acetyl-CoA</name>
        <dbReference type="ChEBI" id="CHEBI:57288"/>
    </ligand>
</feature>
<feature type="binding site" evidence="1">
    <location>
        <position position="311"/>
    </location>
    <ligand>
        <name>acetyl-CoA</name>
        <dbReference type="ChEBI" id="CHEBI:57288"/>
    </ligand>
</feature>
<feature type="binding site" evidence="1">
    <location>
        <position position="338"/>
    </location>
    <ligand>
        <name>glyoxylate</name>
        <dbReference type="ChEBI" id="CHEBI:36655"/>
    </ligand>
</feature>
<feature type="binding site" evidence="1">
    <location>
        <position position="427"/>
    </location>
    <ligand>
        <name>glyoxylate</name>
        <dbReference type="ChEBI" id="CHEBI:36655"/>
    </ligand>
</feature>
<feature type="binding site" evidence="1">
    <location>
        <position position="427"/>
    </location>
    <ligand>
        <name>Mg(2+)</name>
        <dbReference type="ChEBI" id="CHEBI:18420"/>
    </ligand>
</feature>
<feature type="binding site" evidence="1">
    <location>
        <begin position="452"/>
        <end position="455"/>
    </location>
    <ligand>
        <name>glyoxylate</name>
        <dbReference type="ChEBI" id="CHEBI:36655"/>
    </ligand>
</feature>
<feature type="binding site" evidence="1">
    <location>
        <position position="455"/>
    </location>
    <ligand>
        <name>Mg(2+)</name>
        <dbReference type="ChEBI" id="CHEBI:18420"/>
    </ligand>
</feature>
<feature type="binding site" evidence="1">
    <location>
        <position position="536"/>
    </location>
    <ligand>
        <name>acetyl-CoA</name>
        <dbReference type="ChEBI" id="CHEBI:57288"/>
    </ligand>
</feature>
<feature type="modified residue" description="Cysteine sulfenic acid (-SOH)" evidence="1">
    <location>
        <position position="617"/>
    </location>
</feature>
<organism>
    <name type="scientific">Bordetella petrii (strain ATCC BAA-461 / DSM 12804 / CCUG 43448)</name>
    <dbReference type="NCBI Taxonomy" id="340100"/>
    <lineage>
        <taxon>Bacteria</taxon>
        <taxon>Pseudomonadati</taxon>
        <taxon>Pseudomonadota</taxon>
        <taxon>Betaproteobacteria</taxon>
        <taxon>Burkholderiales</taxon>
        <taxon>Alcaligenaceae</taxon>
        <taxon>Bordetella</taxon>
    </lineage>
</organism>
<name>MASZ_BORPD</name>
<sequence length="726" mass="78962">MTERIQQDGLQVAAVLHRFIQDEALPAGGIDAPRFWAGFAALVRDLAPRNRALLAERDRLQRELDTWHRAHPGPVRDLRAYRAFLEQIGYLQPVPGTVRVETANVDAEIAEQAGPQLVVPMSNARYALNAANARWGSLYDALYGTDAIPPTPGDTGRGYHPQRGQAVIARARAFLDEAVPLAQGSHADATGYSVDNGQLRVALAQGSTGLAQPEQFAGYQGDAQAPQAILLKHHGLHIEIQIDRAHSIGATDAAGIKDVVVEAALTTIMDCEDSVAAVDAEDKVQVYRNWLGLMKGDLAEQVTKGGQTFTRRLNADRVYHAPGGGTLTLHGRSLMFVRNVGHLMTNPAVLDADGNEIPEGILDAVVTTLAALPDRASRRNSRAGSIYIVKPKMHGPAEAAFANELFDRVEDLLGLPRHTVKMGIMDEERRTSVNLKACIQAAAGRVAFINTGFLDRTGDEMHSSMEAGPMMRKGDMKSSAWIAAYERSNVLVGLDCGLRGRAQIGKGMWAMPDLMAAMLEQKIGHPKAGANTAWVPSPTAATLHALHYHQVDVPAVQQQLESTRLASVQDELLDGLLTVPVGNPADWSPDDIRHELENNAQGILGYVVRWIDQGVGCSKVPDINNVGLMEDRATLRISSQHIANWMRHGIATREQVRDTFERMAAVVDRQNAGDPLYQPMAGHFDTSIAFQAACALVFEGLAQPNGYTEPLLHQYRLAFKARHNKG</sequence>
<dbReference type="EC" id="2.3.3.9" evidence="1"/>
<dbReference type="EMBL" id="AM902716">
    <property type="protein sequence ID" value="CAP45218.1"/>
    <property type="molecule type" value="Genomic_DNA"/>
</dbReference>
<dbReference type="SMR" id="A9IHH4"/>
<dbReference type="STRING" id="94624.Bpet4866"/>
<dbReference type="KEGG" id="bpt:Bpet4866"/>
<dbReference type="eggNOG" id="COG2225">
    <property type="taxonomic scope" value="Bacteria"/>
</dbReference>
<dbReference type="UniPathway" id="UPA00703">
    <property type="reaction ID" value="UER00720"/>
</dbReference>
<dbReference type="Proteomes" id="UP000001225">
    <property type="component" value="Chromosome"/>
</dbReference>
<dbReference type="GO" id="GO:0005829">
    <property type="term" value="C:cytosol"/>
    <property type="evidence" value="ECO:0007669"/>
    <property type="project" value="TreeGrafter"/>
</dbReference>
<dbReference type="GO" id="GO:0000287">
    <property type="term" value="F:magnesium ion binding"/>
    <property type="evidence" value="ECO:0007669"/>
    <property type="project" value="TreeGrafter"/>
</dbReference>
<dbReference type="GO" id="GO:0004474">
    <property type="term" value="F:malate synthase activity"/>
    <property type="evidence" value="ECO:0007669"/>
    <property type="project" value="UniProtKB-UniRule"/>
</dbReference>
<dbReference type="GO" id="GO:0009436">
    <property type="term" value="P:glyoxylate catabolic process"/>
    <property type="evidence" value="ECO:0007669"/>
    <property type="project" value="TreeGrafter"/>
</dbReference>
<dbReference type="GO" id="GO:0006097">
    <property type="term" value="P:glyoxylate cycle"/>
    <property type="evidence" value="ECO:0007669"/>
    <property type="project" value="UniProtKB-UniRule"/>
</dbReference>
<dbReference type="GO" id="GO:0006099">
    <property type="term" value="P:tricarboxylic acid cycle"/>
    <property type="evidence" value="ECO:0007669"/>
    <property type="project" value="UniProtKB-KW"/>
</dbReference>
<dbReference type="CDD" id="cd00728">
    <property type="entry name" value="malate_synt_G"/>
    <property type="match status" value="1"/>
</dbReference>
<dbReference type="FunFam" id="3.20.20.360:FF:000002">
    <property type="entry name" value="Malate synthase G"/>
    <property type="match status" value="1"/>
</dbReference>
<dbReference type="Gene3D" id="3.20.20.360">
    <property type="entry name" value="Malate synthase, domain 3"/>
    <property type="match status" value="2"/>
</dbReference>
<dbReference type="Gene3D" id="1.20.1220.12">
    <property type="entry name" value="Malate synthase, domain III"/>
    <property type="match status" value="1"/>
</dbReference>
<dbReference type="HAMAP" id="MF_00641">
    <property type="entry name" value="Malate_synth_G"/>
    <property type="match status" value="1"/>
</dbReference>
<dbReference type="InterPro" id="IPR044856">
    <property type="entry name" value="Malate_synth_C_sf"/>
</dbReference>
<dbReference type="InterPro" id="IPR011076">
    <property type="entry name" value="Malate_synth_sf"/>
</dbReference>
<dbReference type="InterPro" id="IPR001465">
    <property type="entry name" value="Malate_synthase_TIM"/>
</dbReference>
<dbReference type="InterPro" id="IPR006253">
    <property type="entry name" value="Malate_synthG"/>
</dbReference>
<dbReference type="InterPro" id="IPR048355">
    <property type="entry name" value="MS_C"/>
</dbReference>
<dbReference type="InterPro" id="IPR048356">
    <property type="entry name" value="MS_N"/>
</dbReference>
<dbReference type="InterPro" id="IPR046363">
    <property type="entry name" value="MS_N_TIM-barrel_dom"/>
</dbReference>
<dbReference type="InterPro" id="IPR048357">
    <property type="entry name" value="MSG_insertion"/>
</dbReference>
<dbReference type="NCBIfam" id="TIGR01345">
    <property type="entry name" value="malate_syn_G"/>
    <property type="match status" value="1"/>
</dbReference>
<dbReference type="NCBIfam" id="NF002825">
    <property type="entry name" value="PRK02999.1"/>
    <property type="match status" value="1"/>
</dbReference>
<dbReference type="PANTHER" id="PTHR42739">
    <property type="entry name" value="MALATE SYNTHASE G"/>
    <property type="match status" value="1"/>
</dbReference>
<dbReference type="PANTHER" id="PTHR42739:SF1">
    <property type="entry name" value="MALATE SYNTHASE G"/>
    <property type="match status" value="1"/>
</dbReference>
<dbReference type="Pfam" id="PF20659">
    <property type="entry name" value="MS_C"/>
    <property type="match status" value="1"/>
</dbReference>
<dbReference type="Pfam" id="PF20656">
    <property type="entry name" value="MS_N"/>
    <property type="match status" value="1"/>
</dbReference>
<dbReference type="Pfam" id="PF01274">
    <property type="entry name" value="MS_TIM-barrel"/>
    <property type="match status" value="1"/>
</dbReference>
<dbReference type="Pfam" id="PF20658">
    <property type="entry name" value="MSG_insertion"/>
    <property type="match status" value="1"/>
</dbReference>
<dbReference type="SUPFAM" id="SSF51645">
    <property type="entry name" value="Malate synthase G"/>
    <property type="match status" value="1"/>
</dbReference>
<comment type="function">
    <text evidence="1">Involved in the glycolate utilization. Catalyzes the condensation and subsequent hydrolysis of acetyl-coenzyme A (acetyl-CoA) and glyoxylate to form malate and CoA.</text>
</comment>
<comment type="catalytic activity">
    <reaction evidence="1">
        <text>glyoxylate + acetyl-CoA + H2O = (S)-malate + CoA + H(+)</text>
        <dbReference type="Rhea" id="RHEA:18181"/>
        <dbReference type="ChEBI" id="CHEBI:15377"/>
        <dbReference type="ChEBI" id="CHEBI:15378"/>
        <dbReference type="ChEBI" id="CHEBI:15589"/>
        <dbReference type="ChEBI" id="CHEBI:36655"/>
        <dbReference type="ChEBI" id="CHEBI:57287"/>
        <dbReference type="ChEBI" id="CHEBI:57288"/>
        <dbReference type="EC" id="2.3.3.9"/>
    </reaction>
</comment>
<comment type="cofactor">
    <cofactor evidence="1">
        <name>Mg(2+)</name>
        <dbReference type="ChEBI" id="CHEBI:18420"/>
    </cofactor>
</comment>
<comment type="pathway">
    <text evidence="1">Carbohydrate metabolism; glyoxylate cycle; (S)-malate from isocitrate: step 2/2.</text>
</comment>
<comment type="subunit">
    <text evidence="1">Monomer.</text>
</comment>
<comment type="subcellular location">
    <subcellularLocation>
        <location evidence="1">Cytoplasm</location>
    </subcellularLocation>
</comment>
<comment type="similarity">
    <text evidence="1">Belongs to the malate synthase family. GlcB subfamily.</text>
</comment>
<accession>A9IHH4</accession>
<protein>
    <recommendedName>
        <fullName evidence="1">Malate synthase G</fullName>
        <ecNumber evidence="1">2.3.3.9</ecNumber>
    </recommendedName>
</protein>